<reference key="1">
    <citation type="journal article" date="2009" name="PLoS Genet.">
        <title>Organised genome dynamics in the Escherichia coli species results in highly diverse adaptive paths.</title>
        <authorList>
            <person name="Touchon M."/>
            <person name="Hoede C."/>
            <person name="Tenaillon O."/>
            <person name="Barbe V."/>
            <person name="Baeriswyl S."/>
            <person name="Bidet P."/>
            <person name="Bingen E."/>
            <person name="Bonacorsi S."/>
            <person name="Bouchier C."/>
            <person name="Bouvet O."/>
            <person name="Calteau A."/>
            <person name="Chiapello H."/>
            <person name="Clermont O."/>
            <person name="Cruveiller S."/>
            <person name="Danchin A."/>
            <person name="Diard M."/>
            <person name="Dossat C."/>
            <person name="Karoui M.E."/>
            <person name="Frapy E."/>
            <person name="Garry L."/>
            <person name="Ghigo J.M."/>
            <person name="Gilles A.M."/>
            <person name="Johnson J."/>
            <person name="Le Bouguenec C."/>
            <person name="Lescat M."/>
            <person name="Mangenot S."/>
            <person name="Martinez-Jehanne V."/>
            <person name="Matic I."/>
            <person name="Nassif X."/>
            <person name="Oztas S."/>
            <person name="Petit M.A."/>
            <person name="Pichon C."/>
            <person name="Rouy Z."/>
            <person name="Ruf C.S."/>
            <person name="Schneider D."/>
            <person name="Tourret J."/>
            <person name="Vacherie B."/>
            <person name="Vallenet D."/>
            <person name="Medigue C."/>
            <person name="Rocha E.P.C."/>
            <person name="Denamur E."/>
        </authorList>
    </citation>
    <scope>NUCLEOTIDE SEQUENCE [LARGE SCALE GENOMIC DNA]</scope>
    <source>
        <strain>IAI39 / ExPEC</strain>
    </source>
</reference>
<comment type="similarity">
    <text evidence="1">Belongs to the UPF0246 family.</text>
</comment>
<accession>B7NHA9</accession>
<dbReference type="EMBL" id="CU928164">
    <property type="protein sequence ID" value="CAR16147.1"/>
    <property type="molecule type" value="Genomic_DNA"/>
</dbReference>
<dbReference type="RefSeq" id="WP_000906193.1">
    <property type="nucleotide sequence ID" value="NC_011750.1"/>
</dbReference>
<dbReference type="RefSeq" id="YP_002406054.1">
    <property type="nucleotide sequence ID" value="NC_011750.1"/>
</dbReference>
<dbReference type="SMR" id="B7NHA9"/>
<dbReference type="STRING" id="585057.ECIAI39_0005"/>
<dbReference type="KEGG" id="ect:ECIAI39_0005"/>
<dbReference type="PATRIC" id="fig|585057.6.peg.5"/>
<dbReference type="HOGENOM" id="CLU_061989_0_0_6"/>
<dbReference type="Proteomes" id="UP000000749">
    <property type="component" value="Chromosome"/>
</dbReference>
<dbReference type="GO" id="GO:0005829">
    <property type="term" value="C:cytosol"/>
    <property type="evidence" value="ECO:0007669"/>
    <property type="project" value="TreeGrafter"/>
</dbReference>
<dbReference type="GO" id="GO:0033194">
    <property type="term" value="P:response to hydroperoxide"/>
    <property type="evidence" value="ECO:0007669"/>
    <property type="project" value="TreeGrafter"/>
</dbReference>
<dbReference type="HAMAP" id="MF_00652">
    <property type="entry name" value="UPF0246"/>
    <property type="match status" value="1"/>
</dbReference>
<dbReference type="InterPro" id="IPR005583">
    <property type="entry name" value="YaaA"/>
</dbReference>
<dbReference type="NCBIfam" id="NF002541">
    <property type="entry name" value="PRK02101.1-1"/>
    <property type="match status" value="1"/>
</dbReference>
<dbReference type="NCBIfam" id="NF002542">
    <property type="entry name" value="PRK02101.1-3"/>
    <property type="match status" value="1"/>
</dbReference>
<dbReference type="PANTHER" id="PTHR30283:SF4">
    <property type="entry name" value="PEROXIDE STRESS RESISTANCE PROTEIN YAAA"/>
    <property type="match status" value="1"/>
</dbReference>
<dbReference type="PANTHER" id="PTHR30283">
    <property type="entry name" value="PEROXIDE STRESS RESPONSE PROTEIN YAAA"/>
    <property type="match status" value="1"/>
</dbReference>
<dbReference type="Pfam" id="PF03883">
    <property type="entry name" value="H2O2_YaaD"/>
    <property type="match status" value="1"/>
</dbReference>
<sequence length="258" mass="29586">MLILISPAKTLDYQSPLTTTRYTLPELLDNSQQLIHEARKLTPPQISSLMRISDKLAGINAARFHDWQPDFTPENARQAILAFKGDVYTGLQAETFSEDDFDFAQQHLRMLSGLYGVLRPLDLMQPYRLEMGIRLENARGKDLYQFWGDIITNKLNEALAAQGDNVVINLASDEYFKSVKPKKLNAEIIKPVFLDEKNGKFKIISFYAKKARGLMSRFIIENRLTKPEQLTGFNSEGYFFDEASSSNGELVFKRYEQR</sequence>
<name>YAAA_ECO7I</name>
<gene>
    <name evidence="1" type="primary">yaaA</name>
    <name type="ordered locus">ECIAI39_0005</name>
</gene>
<evidence type="ECO:0000255" key="1">
    <source>
        <dbReference type="HAMAP-Rule" id="MF_00652"/>
    </source>
</evidence>
<organism>
    <name type="scientific">Escherichia coli O7:K1 (strain IAI39 / ExPEC)</name>
    <dbReference type="NCBI Taxonomy" id="585057"/>
    <lineage>
        <taxon>Bacteria</taxon>
        <taxon>Pseudomonadati</taxon>
        <taxon>Pseudomonadota</taxon>
        <taxon>Gammaproteobacteria</taxon>
        <taxon>Enterobacterales</taxon>
        <taxon>Enterobacteriaceae</taxon>
        <taxon>Escherichia</taxon>
    </lineage>
</organism>
<proteinExistence type="inferred from homology"/>
<protein>
    <recommendedName>
        <fullName evidence="1">UPF0246 protein YaaA</fullName>
    </recommendedName>
</protein>
<feature type="chain" id="PRO_1000131113" description="UPF0246 protein YaaA">
    <location>
        <begin position="1"/>
        <end position="258"/>
    </location>
</feature>